<protein>
    <recommendedName>
        <fullName evidence="1">3-phosphoshikimate 1-carboxyvinyltransferase</fullName>
        <ecNumber evidence="1">2.5.1.19</ecNumber>
    </recommendedName>
    <alternativeName>
        <fullName evidence="1">5-enolpyruvylshikimate-3-phosphate synthase</fullName>
        <shortName evidence="1">EPSP synthase</shortName>
        <shortName evidence="1">EPSPS</shortName>
    </alternativeName>
</protein>
<keyword id="KW-0028">Amino-acid biosynthesis</keyword>
<keyword id="KW-0057">Aromatic amino acid biosynthesis</keyword>
<keyword id="KW-0963">Cytoplasm</keyword>
<keyword id="KW-0808">Transferase</keyword>
<reference key="1">
    <citation type="journal article" date="2003" name="Nature">
        <title>The genome of a motile marine Synechococcus.</title>
        <authorList>
            <person name="Palenik B."/>
            <person name="Brahamsha B."/>
            <person name="Larimer F.W."/>
            <person name="Land M.L."/>
            <person name="Hauser L."/>
            <person name="Chain P."/>
            <person name="Lamerdin J.E."/>
            <person name="Regala W."/>
            <person name="Allen E.E."/>
            <person name="McCarren J."/>
            <person name="Paulsen I.T."/>
            <person name="Dufresne A."/>
            <person name="Partensky F."/>
            <person name="Webb E.A."/>
            <person name="Waterbury J."/>
        </authorList>
    </citation>
    <scope>NUCLEOTIDE SEQUENCE [LARGE SCALE GENOMIC DNA]</scope>
    <source>
        <strain>WH8102</strain>
    </source>
</reference>
<proteinExistence type="inferred from homology"/>
<name>AROA_PARMW</name>
<feature type="chain" id="PRO_0000325392" description="3-phosphoshikimate 1-carboxyvinyltransferase">
    <location>
        <begin position="1"/>
        <end position="441"/>
    </location>
</feature>
<feature type="region of interest" description="Disordered" evidence="2">
    <location>
        <begin position="1"/>
        <end position="21"/>
    </location>
</feature>
<feature type="active site" description="Proton acceptor" evidence="1">
    <location>
        <position position="328"/>
    </location>
</feature>
<feature type="binding site" evidence="1">
    <location>
        <position position="29"/>
    </location>
    <ligand>
        <name>3-phosphoshikimate</name>
        <dbReference type="ChEBI" id="CHEBI:145989"/>
    </ligand>
</feature>
<feature type="binding site" evidence="1">
    <location>
        <position position="29"/>
    </location>
    <ligand>
        <name>phosphoenolpyruvate</name>
        <dbReference type="ChEBI" id="CHEBI:58702"/>
    </ligand>
</feature>
<feature type="binding site" evidence="1">
    <location>
        <position position="30"/>
    </location>
    <ligand>
        <name>3-phosphoshikimate</name>
        <dbReference type="ChEBI" id="CHEBI:145989"/>
    </ligand>
</feature>
<feature type="binding site" evidence="1">
    <location>
        <position position="34"/>
    </location>
    <ligand>
        <name>3-phosphoshikimate</name>
        <dbReference type="ChEBI" id="CHEBI:145989"/>
    </ligand>
</feature>
<feature type="binding site" evidence="1">
    <location>
        <position position="103"/>
    </location>
    <ligand>
        <name>phosphoenolpyruvate</name>
        <dbReference type="ChEBI" id="CHEBI:58702"/>
    </ligand>
</feature>
<feature type="binding site" evidence="1">
    <location>
        <position position="132"/>
    </location>
    <ligand>
        <name>phosphoenolpyruvate</name>
        <dbReference type="ChEBI" id="CHEBI:58702"/>
    </ligand>
</feature>
<feature type="binding site" evidence="1">
    <location>
        <position position="177"/>
    </location>
    <ligand>
        <name>3-phosphoshikimate</name>
        <dbReference type="ChEBI" id="CHEBI:145989"/>
    </ligand>
</feature>
<feature type="binding site" evidence="1">
    <location>
        <position position="179"/>
    </location>
    <ligand>
        <name>3-phosphoshikimate</name>
        <dbReference type="ChEBI" id="CHEBI:145989"/>
    </ligand>
</feature>
<feature type="binding site" evidence="1">
    <location>
        <position position="179"/>
    </location>
    <ligand>
        <name>phosphoenolpyruvate</name>
        <dbReference type="ChEBI" id="CHEBI:58702"/>
    </ligand>
</feature>
<feature type="binding site" evidence="1">
    <location>
        <position position="328"/>
    </location>
    <ligand>
        <name>3-phosphoshikimate</name>
        <dbReference type="ChEBI" id="CHEBI:145989"/>
    </ligand>
</feature>
<feature type="binding site" evidence="1">
    <location>
        <position position="355"/>
    </location>
    <ligand>
        <name>3-phosphoshikimate</name>
        <dbReference type="ChEBI" id="CHEBI:145989"/>
    </ligand>
</feature>
<feature type="binding site" evidence="1">
    <location>
        <position position="359"/>
    </location>
    <ligand>
        <name>phosphoenolpyruvate</name>
        <dbReference type="ChEBI" id="CHEBI:58702"/>
    </ligand>
</feature>
<feature type="binding site" evidence="1">
    <location>
        <position position="401"/>
    </location>
    <ligand>
        <name>phosphoenolpyruvate</name>
        <dbReference type="ChEBI" id="CHEBI:58702"/>
    </ligand>
</feature>
<accession>Q7U7H8</accession>
<comment type="function">
    <text evidence="1">Catalyzes the transfer of the enolpyruvyl moiety of phosphoenolpyruvate (PEP) to the 5-hydroxyl of shikimate-3-phosphate (S3P) to produce enolpyruvyl shikimate-3-phosphate and inorganic phosphate.</text>
</comment>
<comment type="catalytic activity">
    <reaction evidence="1">
        <text>3-phosphoshikimate + phosphoenolpyruvate = 5-O-(1-carboxyvinyl)-3-phosphoshikimate + phosphate</text>
        <dbReference type="Rhea" id="RHEA:21256"/>
        <dbReference type="ChEBI" id="CHEBI:43474"/>
        <dbReference type="ChEBI" id="CHEBI:57701"/>
        <dbReference type="ChEBI" id="CHEBI:58702"/>
        <dbReference type="ChEBI" id="CHEBI:145989"/>
        <dbReference type="EC" id="2.5.1.19"/>
    </reaction>
    <physiologicalReaction direction="left-to-right" evidence="1">
        <dbReference type="Rhea" id="RHEA:21257"/>
    </physiologicalReaction>
</comment>
<comment type="pathway">
    <text evidence="1">Metabolic intermediate biosynthesis; chorismate biosynthesis; chorismate from D-erythrose 4-phosphate and phosphoenolpyruvate: step 6/7.</text>
</comment>
<comment type="subunit">
    <text evidence="1">Monomer.</text>
</comment>
<comment type="subcellular location">
    <subcellularLocation>
        <location evidence="1">Cytoplasm</location>
    </subcellularLocation>
</comment>
<comment type="similarity">
    <text evidence="1">Belongs to the EPSP synthase family.</text>
</comment>
<evidence type="ECO:0000255" key="1">
    <source>
        <dbReference type="HAMAP-Rule" id="MF_00210"/>
    </source>
</evidence>
<evidence type="ECO:0000256" key="2">
    <source>
        <dbReference type="SAM" id="MobiDB-lite"/>
    </source>
</evidence>
<organism>
    <name type="scientific">Parasynechococcus marenigrum (strain WH8102)</name>
    <dbReference type="NCBI Taxonomy" id="84588"/>
    <lineage>
        <taxon>Bacteria</taxon>
        <taxon>Bacillati</taxon>
        <taxon>Cyanobacteriota</taxon>
        <taxon>Cyanophyceae</taxon>
        <taxon>Synechococcales</taxon>
        <taxon>Prochlorococcaceae</taxon>
        <taxon>Parasynechococcus</taxon>
        <taxon>Parasynechococcus marenigrum</taxon>
    </lineage>
</organism>
<gene>
    <name evidence="1" type="primary">aroA</name>
    <name type="ordered locus">SYNW1005</name>
</gene>
<sequence>MSANGPSHPARELKAGGSLSGHVKVPGDKSISHRSLLFGAIAEGTTTIDGLLPAEDPISTAACLRAMGVLISPIEAAGLVTVEGVGLDGLQEPAEILDCGNSGTTMRLMLGLLAGRAGRHFVLDGDASLRRRPMRRVGQPLASMGADVRGRDGGNLAPLAVQGQSLRGTVIGTPVASAQVKSALLLAALTADGTTTVIEPAQSRDHSERMLRAFGADLQVGGEMGRHITVRPGNTLKGQQVVVPGDISSAAFWLVAGALVPGADLTIENVGLNPTRTGILEVLEQMNAQIEVLNRRDVAGEPVGDLRITHGPLQPFSIGEEIMPRLVDEVPILSVAACFCDGESRISGASELRVKETDRLAVMARQLKAMGAEIEEHEDGMTIHGGRPLKGAALDSETDHRVAMSLAVASLLASGDSTLQRSDAAAVSYPSFWDDLDRLRC</sequence>
<dbReference type="EC" id="2.5.1.19" evidence="1"/>
<dbReference type="EMBL" id="BX569691">
    <property type="protein sequence ID" value="CAE07520.1"/>
    <property type="molecule type" value="Genomic_DNA"/>
</dbReference>
<dbReference type="RefSeq" id="WP_011127870.1">
    <property type="nucleotide sequence ID" value="NC_005070.1"/>
</dbReference>
<dbReference type="SMR" id="Q7U7H8"/>
<dbReference type="STRING" id="84588.SYNW1005"/>
<dbReference type="KEGG" id="syw:SYNW1005"/>
<dbReference type="eggNOG" id="COG0128">
    <property type="taxonomic scope" value="Bacteria"/>
</dbReference>
<dbReference type="HOGENOM" id="CLU_024321_0_1_3"/>
<dbReference type="UniPathway" id="UPA00053">
    <property type="reaction ID" value="UER00089"/>
</dbReference>
<dbReference type="Proteomes" id="UP000001422">
    <property type="component" value="Chromosome"/>
</dbReference>
<dbReference type="GO" id="GO:0005737">
    <property type="term" value="C:cytoplasm"/>
    <property type="evidence" value="ECO:0007669"/>
    <property type="project" value="UniProtKB-SubCell"/>
</dbReference>
<dbReference type="GO" id="GO:0003866">
    <property type="term" value="F:3-phosphoshikimate 1-carboxyvinyltransferase activity"/>
    <property type="evidence" value="ECO:0007669"/>
    <property type="project" value="UniProtKB-UniRule"/>
</dbReference>
<dbReference type="GO" id="GO:0008652">
    <property type="term" value="P:amino acid biosynthetic process"/>
    <property type="evidence" value="ECO:0007669"/>
    <property type="project" value="UniProtKB-KW"/>
</dbReference>
<dbReference type="GO" id="GO:0009073">
    <property type="term" value="P:aromatic amino acid family biosynthetic process"/>
    <property type="evidence" value="ECO:0007669"/>
    <property type="project" value="UniProtKB-KW"/>
</dbReference>
<dbReference type="GO" id="GO:0009423">
    <property type="term" value="P:chorismate biosynthetic process"/>
    <property type="evidence" value="ECO:0007669"/>
    <property type="project" value="UniProtKB-UniRule"/>
</dbReference>
<dbReference type="CDD" id="cd01556">
    <property type="entry name" value="EPSP_synthase"/>
    <property type="match status" value="1"/>
</dbReference>
<dbReference type="FunFam" id="3.65.10.10:FF:000005">
    <property type="entry name" value="3-phosphoshikimate 1-carboxyvinyltransferase"/>
    <property type="match status" value="1"/>
</dbReference>
<dbReference type="FunFam" id="3.65.10.10:FF:000006">
    <property type="entry name" value="3-phosphoshikimate 1-carboxyvinyltransferase"/>
    <property type="match status" value="1"/>
</dbReference>
<dbReference type="Gene3D" id="3.65.10.10">
    <property type="entry name" value="Enolpyruvate transferase domain"/>
    <property type="match status" value="2"/>
</dbReference>
<dbReference type="HAMAP" id="MF_00210">
    <property type="entry name" value="EPSP_synth"/>
    <property type="match status" value="1"/>
</dbReference>
<dbReference type="InterPro" id="IPR001986">
    <property type="entry name" value="Enolpyruvate_Tfrase_dom"/>
</dbReference>
<dbReference type="InterPro" id="IPR036968">
    <property type="entry name" value="Enolpyruvate_Tfrase_sf"/>
</dbReference>
<dbReference type="InterPro" id="IPR006264">
    <property type="entry name" value="EPSP_synthase"/>
</dbReference>
<dbReference type="InterPro" id="IPR023193">
    <property type="entry name" value="EPSP_synthase_CS"/>
</dbReference>
<dbReference type="InterPro" id="IPR013792">
    <property type="entry name" value="RNA3'P_cycl/enolpyr_Trfase_a/b"/>
</dbReference>
<dbReference type="NCBIfam" id="TIGR01356">
    <property type="entry name" value="aroA"/>
    <property type="match status" value="1"/>
</dbReference>
<dbReference type="PANTHER" id="PTHR21090">
    <property type="entry name" value="AROM/DEHYDROQUINATE SYNTHASE"/>
    <property type="match status" value="1"/>
</dbReference>
<dbReference type="PANTHER" id="PTHR21090:SF5">
    <property type="entry name" value="PENTAFUNCTIONAL AROM POLYPEPTIDE"/>
    <property type="match status" value="1"/>
</dbReference>
<dbReference type="Pfam" id="PF00275">
    <property type="entry name" value="EPSP_synthase"/>
    <property type="match status" value="1"/>
</dbReference>
<dbReference type="PIRSF" id="PIRSF000505">
    <property type="entry name" value="EPSPS"/>
    <property type="match status" value="1"/>
</dbReference>
<dbReference type="SUPFAM" id="SSF55205">
    <property type="entry name" value="EPT/RTPC-like"/>
    <property type="match status" value="1"/>
</dbReference>
<dbReference type="PROSITE" id="PS00104">
    <property type="entry name" value="EPSP_SYNTHASE_1"/>
    <property type="match status" value="1"/>
</dbReference>
<dbReference type="PROSITE" id="PS00885">
    <property type="entry name" value="EPSP_SYNTHASE_2"/>
    <property type="match status" value="1"/>
</dbReference>